<comment type="catalytic activity">
    <reaction>
        <text>an acyl phosphate + H2O = a carboxylate + phosphate + H(+)</text>
        <dbReference type="Rhea" id="RHEA:14965"/>
        <dbReference type="ChEBI" id="CHEBI:15377"/>
        <dbReference type="ChEBI" id="CHEBI:15378"/>
        <dbReference type="ChEBI" id="CHEBI:29067"/>
        <dbReference type="ChEBI" id="CHEBI:43474"/>
        <dbReference type="ChEBI" id="CHEBI:59918"/>
        <dbReference type="EC" id="3.6.1.7"/>
    </reaction>
</comment>
<comment type="similarity">
    <text evidence="2">Belongs to the acylphosphatase family.</text>
</comment>
<evidence type="ECO:0000255" key="1">
    <source>
        <dbReference type="PROSITE-ProRule" id="PRU00520"/>
    </source>
</evidence>
<evidence type="ECO:0000305" key="2"/>
<feature type="chain" id="PRO_0000326677" description="Acylphosphatase">
    <location>
        <begin position="1"/>
        <end position="98"/>
    </location>
</feature>
<feature type="domain" description="Acylphosphatase-like" evidence="1">
    <location>
        <begin position="12"/>
        <end position="98"/>
    </location>
</feature>
<feature type="active site" evidence="1">
    <location>
        <position position="27"/>
    </location>
</feature>
<feature type="active site" evidence="1">
    <location>
        <position position="45"/>
    </location>
</feature>
<reference key="1">
    <citation type="submission" date="2007-03" db="EMBL/GenBank/DDBJ databases">
        <title>Complete sequence of chromosome 2 of Burkholderia vietnamiensis G4.</title>
        <authorList>
            <consortium name="US DOE Joint Genome Institute"/>
            <person name="Copeland A."/>
            <person name="Lucas S."/>
            <person name="Lapidus A."/>
            <person name="Barry K."/>
            <person name="Detter J.C."/>
            <person name="Glavina del Rio T."/>
            <person name="Hammon N."/>
            <person name="Israni S."/>
            <person name="Dalin E."/>
            <person name="Tice H."/>
            <person name="Pitluck S."/>
            <person name="Chain P."/>
            <person name="Malfatti S."/>
            <person name="Shin M."/>
            <person name="Vergez L."/>
            <person name="Schmutz J."/>
            <person name="Larimer F."/>
            <person name="Land M."/>
            <person name="Hauser L."/>
            <person name="Kyrpides N."/>
            <person name="Tiedje J."/>
            <person name="Richardson P."/>
        </authorList>
    </citation>
    <scope>NUCLEOTIDE SEQUENCE [LARGE SCALE GENOMIC DNA]</scope>
    <source>
        <strain>G4 / LMG 22486</strain>
    </source>
</reference>
<accession>A4JK94</accession>
<organism>
    <name type="scientific">Burkholderia vietnamiensis (strain G4 / LMG 22486)</name>
    <name type="common">Burkholderia cepacia (strain R1808)</name>
    <dbReference type="NCBI Taxonomy" id="269482"/>
    <lineage>
        <taxon>Bacteria</taxon>
        <taxon>Pseudomonadati</taxon>
        <taxon>Pseudomonadota</taxon>
        <taxon>Betaproteobacteria</taxon>
        <taxon>Burkholderiales</taxon>
        <taxon>Burkholderiaceae</taxon>
        <taxon>Burkholderia</taxon>
        <taxon>Burkholderia cepacia complex</taxon>
    </lineage>
</organism>
<sequence>MSRNELDERIETYYVRVRGVVQGVGFRHATVREAHALKLRGWVANLEDGSVEAMIQGPGAQIDRMLAWLRHGPPAARVTEVTFEERHVERRFERFQQQ</sequence>
<dbReference type="EC" id="3.6.1.7"/>
<dbReference type="EMBL" id="CP000615">
    <property type="protein sequence ID" value="ABO56697.1"/>
    <property type="molecule type" value="Genomic_DNA"/>
</dbReference>
<dbReference type="SMR" id="A4JK94"/>
<dbReference type="KEGG" id="bvi:Bcep1808_3712"/>
<dbReference type="eggNOG" id="COG1254">
    <property type="taxonomic scope" value="Bacteria"/>
</dbReference>
<dbReference type="HOGENOM" id="CLU_141932_1_2_4"/>
<dbReference type="Proteomes" id="UP000002287">
    <property type="component" value="Chromosome 2"/>
</dbReference>
<dbReference type="GO" id="GO:0003998">
    <property type="term" value="F:acylphosphatase activity"/>
    <property type="evidence" value="ECO:0007669"/>
    <property type="project" value="UniProtKB-EC"/>
</dbReference>
<dbReference type="Gene3D" id="3.30.70.100">
    <property type="match status" value="1"/>
</dbReference>
<dbReference type="InterPro" id="IPR020456">
    <property type="entry name" value="Acylphosphatase"/>
</dbReference>
<dbReference type="InterPro" id="IPR001792">
    <property type="entry name" value="Acylphosphatase-like_dom"/>
</dbReference>
<dbReference type="InterPro" id="IPR036046">
    <property type="entry name" value="Acylphosphatase-like_dom_sf"/>
</dbReference>
<dbReference type="InterPro" id="IPR017968">
    <property type="entry name" value="Acylphosphatase_CS"/>
</dbReference>
<dbReference type="NCBIfam" id="NF010998">
    <property type="entry name" value="PRK14424.1"/>
    <property type="match status" value="1"/>
</dbReference>
<dbReference type="PANTHER" id="PTHR47268">
    <property type="entry name" value="ACYLPHOSPHATASE"/>
    <property type="match status" value="1"/>
</dbReference>
<dbReference type="PANTHER" id="PTHR47268:SF4">
    <property type="entry name" value="ACYLPHOSPHATASE"/>
    <property type="match status" value="1"/>
</dbReference>
<dbReference type="Pfam" id="PF00708">
    <property type="entry name" value="Acylphosphatase"/>
    <property type="match status" value="1"/>
</dbReference>
<dbReference type="PRINTS" id="PR00112">
    <property type="entry name" value="ACYLPHPHTASE"/>
</dbReference>
<dbReference type="SUPFAM" id="SSF54975">
    <property type="entry name" value="Acylphosphatase/BLUF domain-like"/>
    <property type="match status" value="1"/>
</dbReference>
<dbReference type="PROSITE" id="PS00150">
    <property type="entry name" value="ACYLPHOSPHATASE_1"/>
    <property type="match status" value="1"/>
</dbReference>
<dbReference type="PROSITE" id="PS00151">
    <property type="entry name" value="ACYLPHOSPHATASE_2"/>
    <property type="match status" value="1"/>
</dbReference>
<dbReference type="PROSITE" id="PS51160">
    <property type="entry name" value="ACYLPHOSPHATASE_3"/>
    <property type="match status" value="1"/>
</dbReference>
<name>ACYP_BURVG</name>
<proteinExistence type="inferred from homology"/>
<keyword id="KW-0378">Hydrolase</keyword>
<gene>
    <name type="primary">acyP</name>
    <name type="ordered locus">Bcep1808_3712</name>
</gene>
<protein>
    <recommendedName>
        <fullName>Acylphosphatase</fullName>
        <ecNumber>3.6.1.7</ecNumber>
    </recommendedName>
    <alternativeName>
        <fullName>Acylphosphate phosphohydrolase</fullName>
    </alternativeName>
</protein>